<gene>
    <name type="primary">NR0B1</name>
    <name type="synonym">AHCH</name>
    <name type="synonym">DAX1</name>
</gene>
<comment type="function">
    <text evidence="1 2">Nuclear receptor that lacks a DNA-binding domain and acts as a corepressor that inhibits the transcriptional activity of other nuclear receptors through heterodimeric interactions. Component of a cascade required for the development of the hypothalamic-pituitary-adrenal-gonadal axis (By similarity). May also have a role in the development of the embryo and in the maintenance of embryonic stem cell pluripotency (By similarity).</text>
</comment>
<comment type="subunit">
    <text evidence="1 2">Homodimer. Interacts with NR5A1, NR5A2, NR0B2 and with COPS2 (By similarity). Interacts with ESRRB; represses ESRRB activity at the GATA6 promoter (By similarity).</text>
</comment>
<comment type="subcellular location">
    <subcellularLocation>
        <location evidence="1">Nucleus</location>
    </subcellularLocation>
    <subcellularLocation>
        <location evidence="1">Cytoplasm</location>
    </subcellularLocation>
    <text evidence="1">Shuttles between the cytoplasm and nucleus. Homodimers exits in the cytoplasm and in the nucleus.</text>
</comment>
<comment type="domain">
    <text evidence="1">Homodimerization involved an interaction between amino and carboxy termini involving LXXLL motifs and steroid binding domain (AF-2 motif). Heterodimerizes with NR5A1 and NROB2 through its N-terminal LXXLL motifs.</text>
</comment>
<comment type="similarity">
    <text evidence="5">Belongs to the nuclear hormone receptor family. NR0 subfamily.</text>
</comment>
<keyword id="KW-0963">Cytoplasm</keyword>
<keyword id="KW-0539">Nucleus</keyword>
<keyword id="KW-0675">Receptor</keyword>
<keyword id="KW-1185">Reference proteome</keyword>
<keyword id="KW-0677">Repeat</keyword>
<keyword id="KW-0678">Repressor</keyword>
<keyword id="KW-0804">Transcription</keyword>
<keyword id="KW-0805">Transcription regulation</keyword>
<evidence type="ECO:0000250" key="1">
    <source>
        <dbReference type="UniProtKB" id="P51843"/>
    </source>
</evidence>
<evidence type="ECO:0000250" key="2">
    <source>
        <dbReference type="UniProtKB" id="Q61066"/>
    </source>
</evidence>
<evidence type="ECO:0000255" key="3">
    <source>
        <dbReference type="PROSITE-ProRule" id="PRU01189"/>
    </source>
</evidence>
<evidence type="ECO:0000269" key="4">
    <source ref="2"/>
</evidence>
<evidence type="ECO:0000305" key="5"/>
<protein>
    <recommendedName>
        <fullName>Nuclear receptor subfamily 0 group B member 1</fullName>
    </recommendedName>
    <alternativeName>
        <fullName>Nuclear receptor DAX-1</fullName>
    </alternativeName>
</protein>
<name>NR0B1_PIG</name>
<sequence>MAGEDHQWQGSILYNMLMSAKQTHATREAPEARLRGSCWGCSCGSEPPVGREGQPGGPAVALLYRCCFCGEDHPRQGSILYNMLTSAKQTQETPEAPEARLGGACWGCSCGSEPRVGREELPGGRATVLLYRCCFCGEEHPRQGSILYSLLTSAKQTHVALEAPEARPGGAWWDRSYCAQRLGAREELPGGRPVTLPYRCCFCGEDHPRQSGILCNMPMSAKQTHVAPEAQPGAPWWDPSCAAQRVALKSPQVVCEAASAGLLKTLRFVKYLPCFQVLPLDQQLVLVRSCWAPLLMLELAQDRLNFETVETLEPSLLQMILTTRRQETEGDEPPSPQPPVQPHLVLPSEAEHLPSVAEVQAIKGFLAKCWSLDISTKEYAYLKGTVLFNPDLPGLQCVKYIQGLQWGTQQILSEHIRMTHRGYQARFAELNSALFLLRFINANVLAELFFRPIIGTVSMDDMMLEMLCAKL</sequence>
<reference key="1">
    <citation type="journal article" date="1997" name="Mol. Cell. Endocrinol.">
        <title>Porcine Dax-1 gene: isolation and expression during gonadal development.</title>
        <authorList>
            <person name="Parma P."/>
            <person name="Pailhoux E."/>
            <person name="Puissant C."/>
            <person name="Cotinot C."/>
        </authorList>
    </citation>
    <scope>NUCLEOTIDE SEQUENCE [MRNA]</scope>
    <source>
        <tissue>Adrenal gland</tissue>
    </source>
</reference>
<reference key="2">
    <citation type="submission" date="1997-11" db="EMBL/GenBank/DDBJ databases">
        <authorList>
            <person name="Parma P."/>
            <person name="Pailhoux E."/>
            <person name="Cotinot C."/>
        </authorList>
    </citation>
    <scope>NUCLEOTIDE SEQUENCE [MRNA]</scope>
    <scope>VARIANT ALLELE 21BPDEL 352-HIS--GLU-358 DEL</scope>
    <source>
        <tissue>Testis</tissue>
    </source>
</reference>
<reference key="3">
    <citation type="submission" date="1997-09" db="EMBL/GenBank/DDBJ databases">
        <authorList>
            <person name="Behdjani R."/>
            <person name="Silversides D.W."/>
        </authorList>
    </citation>
    <scope>NUCLEOTIDE SEQUENCE [GENOMIC DNA] OF 1-390</scope>
</reference>
<organism>
    <name type="scientific">Sus scrofa</name>
    <name type="common">Pig</name>
    <dbReference type="NCBI Taxonomy" id="9823"/>
    <lineage>
        <taxon>Eukaryota</taxon>
        <taxon>Metazoa</taxon>
        <taxon>Chordata</taxon>
        <taxon>Craniata</taxon>
        <taxon>Vertebrata</taxon>
        <taxon>Euteleostomi</taxon>
        <taxon>Mammalia</taxon>
        <taxon>Eutheria</taxon>
        <taxon>Laurasiatheria</taxon>
        <taxon>Artiodactyla</taxon>
        <taxon>Suina</taxon>
        <taxon>Suidae</taxon>
        <taxon>Sus</taxon>
    </lineage>
</organism>
<dbReference type="EMBL" id="U82466">
    <property type="protein sequence ID" value="AAB81101.1"/>
    <property type="molecule type" value="mRNA"/>
</dbReference>
<dbReference type="EMBL" id="AF035816">
    <property type="protein sequence ID" value="AAC04761.1"/>
    <property type="molecule type" value="mRNA"/>
</dbReference>
<dbReference type="EMBL" id="AF019044">
    <property type="protein sequence ID" value="AAB70254.1"/>
    <property type="molecule type" value="Genomic_DNA"/>
</dbReference>
<dbReference type="RefSeq" id="NP_999552.1">
    <property type="nucleotide sequence ID" value="NM_214387.1"/>
</dbReference>
<dbReference type="SMR" id="P79386"/>
<dbReference type="FunCoup" id="P79386">
    <property type="interactions" value="162"/>
</dbReference>
<dbReference type="STRING" id="9823.ENSSSCP00000012986"/>
<dbReference type="PaxDb" id="9823-ENSSSCP00000012986"/>
<dbReference type="GeneID" id="397680"/>
<dbReference type="KEGG" id="ssc:397680"/>
<dbReference type="CTD" id="190"/>
<dbReference type="eggNOG" id="KOG3575">
    <property type="taxonomic scope" value="Eukaryota"/>
</dbReference>
<dbReference type="HOGENOM" id="CLU_674314_0_0_1"/>
<dbReference type="InParanoid" id="P79386"/>
<dbReference type="OrthoDB" id="9926883at2759"/>
<dbReference type="Proteomes" id="UP000008227">
    <property type="component" value="Unplaced"/>
</dbReference>
<dbReference type="Proteomes" id="UP000314985">
    <property type="component" value="Unplaced"/>
</dbReference>
<dbReference type="Proteomes" id="UP000694570">
    <property type="component" value="Unplaced"/>
</dbReference>
<dbReference type="Proteomes" id="UP000694571">
    <property type="component" value="Unplaced"/>
</dbReference>
<dbReference type="Proteomes" id="UP000694720">
    <property type="component" value="Unplaced"/>
</dbReference>
<dbReference type="Proteomes" id="UP000694722">
    <property type="component" value="Unplaced"/>
</dbReference>
<dbReference type="Proteomes" id="UP000694723">
    <property type="component" value="Unplaced"/>
</dbReference>
<dbReference type="Proteomes" id="UP000694724">
    <property type="component" value="Unplaced"/>
</dbReference>
<dbReference type="Proteomes" id="UP000694725">
    <property type="component" value="Unplaced"/>
</dbReference>
<dbReference type="Proteomes" id="UP000694726">
    <property type="component" value="Unplaced"/>
</dbReference>
<dbReference type="Proteomes" id="UP000694727">
    <property type="component" value="Unplaced"/>
</dbReference>
<dbReference type="Proteomes" id="UP000694728">
    <property type="component" value="Unplaced"/>
</dbReference>
<dbReference type="GO" id="GO:0005737">
    <property type="term" value="C:cytoplasm"/>
    <property type="evidence" value="ECO:0000250"/>
    <property type="project" value="UniProtKB"/>
</dbReference>
<dbReference type="GO" id="GO:0016020">
    <property type="term" value="C:membrane"/>
    <property type="evidence" value="ECO:0000250"/>
    <property type="project" value="UniProtKB"/>
</dbReference>
<dbReference type="GO" id="GO:0005634">
    <property type="term" value="C:nucleus"/>
    <property type="evidence" value="ECO:0000250"/>
    <property type="project" value="HGNC-UCL"/>
</dbReference>
<dbReference type="GO" id="GO:0005840">
    <property type="term" value="C:ribosome"/>
    <property type="evidence" value="ECO:0000250"/>
    <property type="project" value="HGNC-UCL"/>
</dbReference>
<dbReference type="GO" id="GO:0032448">
    <property type="term" value="F:DNA hairpin binding"/>
    <property type="evidence" value="ECO:0000250"/>
    <property type="project" value="HGNC-UCL"/>
</dbReference>
<dbReference type="GO" id="GO:0016922">
    <property type="term" value="F:nuclear receptor binding"/>
    <property type="evidence" value="ECO:0000250"/>
    <property type="project" value="UniProtKB"/>
</dbReference>
<dbReference type="GO" id="GO:0019904">
    <property type="term" value="F:protein domain specific binding"/>
    <property type="evidence" value="ECO:0000250"/>
    <property type="project" value="UniProtKB"/>
</dbReference>
<dbReference type="GO" id="GO:0042803">
    <property type="term" value="F:protein homodimerization activity"/>
    <property type="evidence" value="ECO:0000250"/>
    <property type="project" value="UniProtKB"/>
</dbReference>
<dbReference type="GO" id="GO:0003723">
    <property type="term" value="F:RNA binding"/>
    <property type="evidence" value="ECO:0000250"/>
    <property type="project" value="HGNC-UCL"/>
</dbReference>
<dbReference type="GO" id="GO:0003714">
    <property type="term" value="F:transcription corepressor activity"/>
    <property type="evidence" value="ECO:0000318"/>
    <property type="project" value="GO_Central"/>
</dbReference>
<dbReference type="GO" id="GO:0030325">
    <property type="term" value="P:adrenal gland development"/>
    <property type="evidence" value="ECO:0000250"/>
    <property type="project" value="HGNC-UCL"/>
</dbReference>
<dbReference type="GO" id="GO:0008406">
    <property type="term" value="P:gonad development"/>
    <property type="evidence" value="ECO:0000250"/>
    <property type="project" value="HGNC-UCL"/>
</dbReference>
<dbReference type="GO" id="GO:0008584">
    <property type="term" value="P:male gonad development"/>
    <property type="evidence" value="ECO:0000250"/>
    <property type="project" value="UniProtKB"/>
</dbReference>
<dbReference type="GO" id="GO:0045892">
    <property type="term" value="P:negative regulation of DNA-templated transcription"/>
    <property type="evidence" value="ECO:0000250"/>
    <property type="project" value="HGNC-UCL"/>
</dbReference>
<dbReference type="GO" id="GO:0033144">
    <property type="term" value="P:negative regulation of intracellular steroid hormone receptor signaling pathway"/>
    <property type="evidence" value="ECO:0000250"/>
    <property type="project" value="UniProtKB"/>
</dbReference>
<dbReference type="GO" id="GO:0010894">
    <property type="term" value="P:negative regulation of steroid biosynthetic process"/>
    <property type="evidence" value="ECO:0000250"/>
    <property type="project" value="HGNC-UCL"/>
</dbReference>
<dbReference type="GO" id="GO:0000122">
    <property type="term" value="P:negative regulation of transcription by RNA polymerase II"/>
    <property type="evidence" value="ECO:0000318"/>
    <property type="project" value="GO_Central"/>
</dbReference>
<dbReference type="GO" id="GO:0008104">
    <property type="term" value="P:protein localization"/>
    <property type="evidence" value="ECO:0000250"/>
    <property type="project" value="UniProtKB"/>
</dbReference>
<dbReference type="GO" id="GO:0007283">
    <property type="term" value="P:spermatogenesis"/>
    <property type="evidence" value="ECO:0000318"/>
    <property type="project" value="GO_Central"/>
</dbReference>
<dbReference type="CDD" id="cd07350">
    <property type="entry name" value="NR_LBD_Dax1"/>
    <property type="match status" value="1"/>
</dbReference>
<dbReference type="FunFam" id="1.10.565.10:FF:000027">
    <property type="entry name" value="nuclear receptor subfamily 0 group B member 1"/>
    <property type="match status" value="1"/>
</dbReference>
<dbReference type="Gene3D" id="1.10.565.10">
    <property type="entry name" value="Retinoid X Receptor"/>
    <property type="match status" value="1"/>
</dbReference>
<dbReference type="InterPro" id="IPR035500">
    <property type="entry name" value="NHR-like_dom_sf"/>
</dbReference>
<dbReference type="InterPro" id="IPR033544">
    <property type="entry name" value="NR0B1/2"/>
</dbReference>
<dbReference type="InterPro" id="IPR000536">
    <property type="entry name" value="Nucl_hrmn_rcpt_lig-bd"/>
</dbReference>
<dbReference type="InterPro" id="IPR001723">
    <property type="entry name" value="Nuclear_hrmn_rcpt"/>
</dbReference>
<dbReference type="InterPro" id="IPR025900">
    <property type="entry name" value="Nuclear_receptor_repeat"/>
</dbReference>
<dbReference type="PANTHER" id="PTHR24081">
    <property type="entry name" value="NUCLEAR RECEPTOR SUBFAMILY 0 GROUP B"/>
    <property type="match status" value="1"/>
</dbReference>
<dbReference type="PANTHER" id="PTHR24081:SF1">
    <property type="entry name" value="NUCLEAR RECEPTOR SUBFAMILY 0 GROUP B MEMBER 1"/>
    <property type="match status" value="1"/>
</dbReference>
<dbReference type="Pfam" id="PF00104">
    <property type="entry name" value="Hormone_recep"/>
    <property type="match status" value="1"/>
</dbReference>
<dbReference type="Pfam" id="PF14046">
    <property type="entry name" value="NR_Repeat"/>
    <property type="match status" value="4"/>
</dbReference>
<dbReference type="PRINTS" id="PR00398">
    <property type="entry name" value="STRDHORMONER"/>
</dbReference>
<dbReference type="SMART" id="SM00430">
    <property type="entry name" value="HOLI"/>
    <property type="match status" value="1"/>
</dbReference>
<dbReference type="SUPFAM" id="SSF48508">
    <property type="entry name" value="Nuclear receptor ligand-binding domain"/>
    <property type="match status" value="1"/>
</dbReference>
<dbReference type="PROSITE" id="PS51843">
    <property type="entry name" value="NR_LBD"/>
    <property type="match status" value="1"/>
</dbReference>
<accession>P79386</accession>
<accession>O46520</accession>
<feature type="chain" id="PRO_0000053750" description="Nuclear receptor subfamily 0 group B member 1">
    <location>
        <begin position="1"/>
        <end position="471"/>
    </location>
</feature>
<feature type="repeat" description="1">
    <location>
        <begin position="1"/>
        <end position="67"/>
    </location>
</feature>
<feature type="repeat" description="2">
    <location>
        <begin position="68"/>
        <end position="134"/>
    </location>
</feature>
<feature type="repeat" description="3">
    <location>
        <begin position="135"/>
        <end position="201"/>
    </location>
</feature>
<feature type="repeat" description="4; truncated">
    <location>
        <begin position="202"/>
        <end position="253"/>
    </location>
</feature>
<feature type="domain" description="NR LBD" evidence="3">
    <location>
        <begin position="210"/>
        <end position="470"/>
    </location>
</feature>
<feature type="region of interest" description="4 X 67 AA tandem repeats">
    <location>
        <begin position="1"/>
        <end position="253"/>
    </location>
</feature>
<feature type="short sequence motif" description="LXXLL motif 1">
    <location>
        <begin position="13"/>
        <end position="17"/>
    </location>
</feature>
<feature type="short sequence motif" description="LXXLL motif 2">
    <location>
        <begin position="80"/>
        <end position="84"/>
    </location>
</feature>
<feature type="short sequence motif" description="LXXLL motif 3">
    <location>
        <begin position="147"/>
        <end position="151"/>
    </location>
</feature>
<feature type="short sequence motif" description="AF-2 motif">
    <location>
        <begin position="462"/>
        <end position="467"/>
    </location>
</feature>
<feature type="sequence variant" description="In allele 21BPDel." evidence="4">
    <location>
        <begin position="352"/>
        <end position="358"/>
    </location>
</feature>
<feature type="sequence conflict" description="In Ref. 3; AAB70254." evidence="5" ref="3">
    <original>GR</original>
    <variation>AG</variation>
    <location>
        <begin position="124"/>
        <end position="125"/>
    </location>
</feature>
<feature type="sequence conflict" description="In Ref. 3; AAB70254." evidence="5" ref="3">
    <original>AQ</original>
    <variation>QR</variation>
    <location>
        <begin position="243"/>
        <end position="244"/>
    </location>
</feature>
<feature type="sequence conflict" description="In Ref. 3; AAB70254." evidence="5" ref="3">
    <original>L</original>
    <variation>V</variation>
    <location>
        <position position="266"/>
    </location>
</feature>
<feature type="sequence conflict" description="In Ref. 3; AAB70254." evidence="5" ref="3">
    <original>S</original>
    <variation>T</variation>
    <location>
        <position position="289"/>
    </location>
</feature>
<proteinExistence type="evidence at transcript level"/>